<reference key="1">
    <citation type="submission" date="2008-05" db="EMBL/GenBank/DDBJ databases">
        <title>Complete sequence of Chlorobium limicola DSM 245.</title>
        <authorList>
            <consortium name="US DOE Joint Genome Institute"/>
            <person name="Lucas S."/>
            <person name="Copeland A."/>
            <person name="Lapidus A."/>
            <person name="Glavina del Rio T."/>
            <person name="Dalin E."/>
            <person name="Tice H."/>
            <person name="Bruce D."/>
            <person name="Goodwin L."/>
            <person name="Pitluck S."/>
            <person name="Schmutz J."/>
            <person name="Larimer F."/>
            <person name="Land M."/>
            <person name="Hauser L."/>
            <person name="Kyrpides N."/>
            <person name="Ovchinnikova G."/>
            <person name="Zhao F."/>
            <person name="Li T."/>
            <person name="Liu Z."/>
            <person name="Overmann J."/>
            <person name="Bryant D.A."/>
            <person name="Richardson P."/>
        </authorList>
    </citation>
    <scope>NUCLEOTIDE SEQUENCE [LARGE SCALE GENOMIC DNA]</scope>
    <source>
        <strain>DSM 245 / NBRC 103803 / 6330</strain>
    </source>
</reference>
<keyword id="KW-0030">Aminoacyl-tRNA synthetase</keyword>
<keyword id="KW-0067">ATP-binding</keyword>
<keyword id="KW-0963">Cytoplasm</keyword>
<keyword id="KW-0436">Ligase</keyword>
<keyword id="KW-0479">Metal-binding</keyword>
<keyword id="KW-0547">Nucleotide-binding</keyword>
<keyword id="KW-0648">Protein biosynthesis</keyword>
<keyword id="KW-0694">RNA-binding</keyword>
<keyword id="KW-0820">tRNA-binding</keyword>
<keyword id="KW-0862">Zinc</keyword>
<sequence length="657" mass="74450">MSDIQEQQASIAITLPDGTVKNVPSGSTGFDIALSIGKRLADDALAVTINGKPTDLHAPVLCDANIEIVTFDSQLGRDIFWHTASHIMAQAIEEIFPGSRFGAGPATEQGFYYDVASEHRFREEDLRAIEQKMLEIAKRNIMLQREEMKRVDAIAYFTSVRNDPYKVEILEDTLKHVDTVSLYHQGDFADLCTGPHLPSTSRLKAVLLSNISSSYWRGDSSRENMQRIYGIAFPSDKLLKEHIARQEEAKRRDHRKLGTELELFMLSPEIGSGLPVWLPKGAVIRSELETFLKEEQRKRGYLPVYTPHIGNIELYKRSGHYPYYSDSQFPPLTYHDEDGKQEQYLLKPMNCPHHHLIYSSKLRSYRDLPIRLTEFGTVYRHEQSGELNGLVRARGFTQDDSHIYCTPEQLVDEICNAIDLTQFVFGTLGFSEVQTRLSMHDPANQQKYGGTAEIWEQAEKDVREAADRMGIDYFIGVGEASFYGPKIDFIVRDALGRKWQLGTVQVDYVMPERFDLSYIGSDGQKHRPVVIHRAPFGSMERFIGVLIEHTAGNFPLWLAPVQAVVLPIAEEVHDYAKTIHTALLAAGIRVEIDTRNEKIGRKIREAEIGKIPCMIIVGQKERDSGEISLRRHRSGDMGSFTVPGLIDILKKEISERT</sequence>
<evidence type="ECO:0000255" key="1">
    <source>
        <dbReference type="HAMAP-Rule" id="MF_00184"/>
    </source>
</evidence>
<evidence type="ECO:0000255" key="2">
    <source>
        <dbReference type="PROSITE-ProRule" id="PRU01228"/>
    </source>
</evidence>
<protein>
    <recommendedName>
        <fullName evidence="1">Threonine--tRNA ligase</fullName>
        <ecNumber evidence="1">6.1.1.3</ecNumber>
    </recommendedName>
    <alternativeName>
        <fullName evidence="1">Threonyl-tRNA synthetase</fullName>
        <shortName evidence="1">ThrRS</shortName>
    </alternativeName>
</protein>
<feature type="chain" id="PRO_1000098555" description="Threonine--tRNA ligase">
    <location>
        <begin position="1"/>
        <end position="657"/>
    </location>
</feature>
<feature type="domain" description="TGS" evidence="2">
    <location>
        <begin position="7"/>
        <end position="70"/>
    </location>
</feature>
<feature type="region of interest" description="Catalytic" evidence="1">
    <location>
        <begin position="253"/>
        <end position="555"/>
    </location>
</feature>
<feature type="binding site" evidence="1">
    <location>
        <position position="351"/>
    </location>
    <ligand>
        <name>Zn(2+)</name>
        <dbReference type="ChEBI" id="CHEBI:29105"/>
    </ligand>
</feature>
<feature type="binding site" evidence="1">
    <location>
        <position position="402"/>
    </location>
    <ligand>
        <name>Zn(2+)</name>
        <dbReference type="ChEBI" id="CHEBI:29105"/>
    </ligand>
</feature>
<feature type="binding site" evidence="1">
    <location>
        <position position="532"/>
    </location>
    <ligand>
        <name>Zn(2+)</name>
        <dbReference type="ChEBI" id="CHEBI:29105"/>
    </ligand>
</feature>
<accession>B3EEC1</accession>
<name>SYT_CHLL2</name>
<comment type="function">
    <text evidence="1">Catalyzes the attachment of threonine to tRNA(Thr) in a two-step reaction: L-threonine is first activated by ATP to form Thr-AMP and then transferred to the acceptor end of tRNA(Thr). Also edits incorrectly charged L-seryl-tRNA(Thr).</text>
</comment>
<comment type="catalytic activity">
    <reaction evidence="1">
        <text>tRNA(Thr) + L-threonine + ATP = L-threonyl-tRNA(Thr) + AMP + diphosphate + H(+)</text>
        <dbReference type="Rhea" id="RHEA:24624"/>
        <dbReference type="Rhea" id="RHEA-COMP:9670"/>
        <dbReference type="Rhea" id="RHEA-COMP:9704"/>
        <dbReference type="ChEBI" id="CHEBI:15378"/>
        <dbReference type="ChEBI" id="CHEBI:30616"/>
        <dbReference type="ChEBI" id="CHEBI:33019"/>
        <dbReference type="ChEBI" id="CHEBI:57926"/>
        <dbReference type="ChEBI" id="CHEBI:78442"/>
        <dbReference type="ChEBI" id="CHEBI:78534"/>
        <dbReference type="ChEBI" id="CHEBI:456215"/>
        <dbReference type="EC" id="6.1.1.3"/>
    </reaction>
</comment>
<comment type="cofactor">
    <cofactor evidence="1">
        <name>Zn(2+)</name>
        <dbReference type="ChEBI" id="CHEBI:29105"/>
    </cofactor>
    <text evidence="1">Binds 1 zinc ion per subunit.</text>
</comment>
<comment type="subunit">
    <text evidence="1">Homodimer.</text>
</comment>
<comment type="subcellular location">
    <subcellularLocation>
        <location evidence="1">Cytoplasm</location>
    </subcellularLocation>
</comment>
<comment type="similarity">
    <text evidence="1">Belongs to the class-II aminoacyl-tRNA synthetase family.</text>
</comment>
<dbReference type="EC" id="6.1.1.3" evidence="1"/>
<dbReference type="EMBL" id="CP001097">
    <property type="protein sequence ID" value="ACD89255.1"/>
    <property type="molecule type" value="Genomic_DNA"/>
</dbReference>
<dbReference type="RefSeq" id="WP_012465136.1">
    <property type="nucleotide sequence ID" value="NC_010803.1"/>
</dbReference>
<dbReference type="SMR" id="B3EEC1"/>
<dbReference type="STRING" id="290315.Clim_0156"/>
<dbReference type="KEGG" id="cli:Clim_0156"/>
<dbReference type="eggNOG" id="COG0441">
    <property type="taxonomic scope" value="Bacteria"/>
</dbReference>
<dbReference type="HOGENOM" id="CLU_008554_0_1_10"/>
<dbReference type="OrthoDB" id="9802304at2"/>
<dbReference type="Proteomes" id="UP000008841">
    <property type="component" value="Chromosome"/>
</dbReference>
<dbReference type="GO" id="GO:0005737">
    <property type="term" value="C:cytoplasm"/>
    <property type="evidence" value="ECO:0007669"/>
    <property type="project" value="UniProtKB-SubCell"/>
</dbReference>
<dbReference type="GO" id="GO:0005524">
    <property type="term" value="F:ATP binding"/>
    <property type="evidence" value="ECO:0007669"/>
    <property type="project" value="UniProtKB-UniRule"/>
</dbReference>
<dbReference type="GO" id="GO:0046872">
    <property type="term" value="F:metal ion binding"/>
    <property type="evidence" value="ECO:0007669"/>
    <property type="project" value="UniProtKB-KW"/>
</dbReference>
<dbReference type="GO" id="GO:0004829">
    <property type="term" value="F:threonine-tRNA ligase activity"/>
    <property type="evidence" value="ECO:0007669"/>
    <property type="project" value="UniProtKB-UniRule"/>
</dbReference>
<dbReference type="GO" id="GO:0000049">
    <property type="term" value="F:tRNA binding"/>
    <property type="evidence" value="ECO:0007669"/>
    <property type="project" value="UniProtKB-KW"/>
</dbReference>
<dbReference type="GO" id="GO:0006435">
    <property type="term" value="P:threonyl-tRNA aminoacylation"/>
    <property type="evidence" value="ECO:0007669"/>
    <property type="project" value="UniProtKB-UniRule"/>
</dbReference>
<dbReference type="CDD" id="cd01667">
    <property type="entry name" value="TGS_ThrRS"/>
    <property type="match status" value="1"/>
</dbReference>
<dbReference type="CDD" id="cd00860">
    <property type="entry name" value="ThrRS_anticodon"/>
    <property type="match status" value="1"/>
</dbReference>
<dbReference type="CDD" id="cd00771">
    <property type="entry name" value="ThrRS_core"/>
    <property type="match status" value="1"/>
</dbReference>
<dbReference type="FunFam" id="3.30.930.10:FF:000002">
    <property type="entry name" value="Threonine--tRNA ligase"/>
    <property type="match status" value="1"/>
</dbReference>
<dbReference type="FunFam" id="3.40.50.800:FF:000001">
    <property type="entry name" value="Threonine--tRNA ligase"/>
    <property type="match status" value="1"/>
</dbReference>
<dbReference type="FunFam" id="3.30.980.10:FF:000005">
    <property type="entry name" value="Threonyl-tRNA synthetase, mitochondrial"/>
    <property type="match status" value="1"/>
</dbReference>
<dbReference type="Gene3D" id="3.10.20.30">
    <property type="match status" value="1"/>
</dbReference>
<dbReference type="Gene3D" id="3.30.54.20">
    <property type="match status" value="1"/>
</dbReference>
<dbReference type="Gene3D" id="3.40.50.800">
    <property type="entry name" value="Anticodon-binding domain"/>
    <property type="match status" value="1"/>
</dbReference>
<dbReference type="Gene3D" id="3.30.930.10">
    <property type="entry name" value="Bira Bifunctional Protein, Domain 2"/>
    <property type="match status" value="1"/>
</dbReference>
<dbReference type="Gene3D" id="3.30.980.10">
    <property type="entry name" value="Threonyl-trna Synthetase, Chain A, domain 2"/>
    <property type="match status" value="1"/>
</dbReference>
<dbReference type="HAMAP" id="MF_00184">
    <property type="entry name" value="Thr_tRNA_synth"/>
    <property type="match status" value="1"/>
</dbReference>
<dbReference type="InterPro" id="IPR002314">
    <property type="entry name" value="aa-tRNA-synt_IIb"/>
</dbReference>
<dbReference type="InterPro" id="IPR006195">
    <property type="entry name" value="aa-tRNA-synth_II"/>
</dbReference>
<dbReference type="InterPro" id="IPR045864">
    <property type="entry name" value="aa-tRNA-synth_II/BPL/LPL"/>
</dbReference>
<dbReference type="InterPro" id="IPR004154">
    <property type="entry name" value="Anticodon-bd"/>
</dbReference>
<dbReference type="InterPro" id="IPR036621">
    <property type="entry name" value="Anticodon-bd_dom_sf"/>
</dbReference>
<dbReference type="InterPro" id="IPR012675">
    <property type="entry name" value="Beta-grasp_dom_sf"/>
</dbReference>
<dbReference type="InterPro" id="IPR004095">
    <property type="entry name" value="TGS"/>
</dbReference>
<dbReference type="InterPro" id="IPR012676">
    <property type="entry name" value="TGS-like"/>
</dbReference>
<dbReference type="InterPro" id="IPR002320">
    <property type="entry name" value="Thr-tRNA-ligase_IIa"/>
</dbReference>
<dbReference type="InterPro" id="IPR018163">
    <property type="entry name" value="Thr/Ala-tRNA-synth_IIc_edit"/>
</dbReference>
<dbReference type="InterPro" id="IPR047246">
    <property type="entry name" value="ThrRS_anticodon"/>
</dbReference>
<dbReference type="InterPro" id="IPR033728">
    <property type="entry name" value="ThrRS_core"/>
</dbReference>
<dbReference type="InterPro" id="IPR012947">
    <property type="entry name" value="tRNA_SAD"/>
</dbReference>
<dbReference type="NCBIfam" id="TIGR00418">
    <property type="entry name" value="thrS"/>
    <property type="match status" value="1"/>
</dbReference>
<dbReference type="PANTHER" id="PTHR11451:SF44">
    <property type="entry name" value="THREONINE--TRNA LIGASE, CHLOROPLASTIC_MITOCHONDRIAL 2"/>
    <property type="match status" value="1"/>
</dbReference>
<dbReference type="PANTHER" id="PTHR11451">
    <property type="entry name" value="THREONINE-TRNA LIGASE"/>
    <property type="match status" value="1"/>
</dbReference>
<dbReference type="Pfam" id="PF03129">
    <property type="entry name" value="HGTP_anticodon"/>
    <property type="match status" value="1"/>
</dbReference>
<dbReference type="Pfam" id="PF02824">
    <property type="entry name" value="TGS"/>
    <property type="match status" value="1"/>
</dbReference>
<dbReference type="Pfam" id="PF00587">
    <property type="entry name" value="tRNA-synt_2b"/>
    <property type="match status" value="1"/>
</dbReference>
<dbReference type="Pfam" id="PF07973">
    <property type="entry name" value="tRNA_SAD"/>
    <property type="match status" value="1"/>
</dbReference>
<dbReference type="PRINTS" id="PR01047">
    <property type="entry name" value="TRNASYNTHTHR"/>
</dbReference>
<dbReference type="SMART" id="SM00863">
    <property type="entry name" value="tRNA_SAD"/>
    <property type="match status" value="1"/>
</dbReference>
<dbReference type="SUPFAM" id="SSF52954">
    <property type="entry name" value="Class II aaRS ABD-related"/>
    <property type="match status" value="1"/>
</dbReference>
<dbReference type="SUPFAM" id="SSF55681">
    <property type="entry name" value="Class II aaRS and biotin synthetases"/>
    <property type="match status" value="1"/>
</dbReference>
<dbReference type="SUPFAM" id="SSF81271">
    <property type="entry name" value="TGS-like"/>
    <property type="match status" value="1"/>
</dbReference>
<dbReference type="SUPFAM" id="SSF55186">
    <property type="entry name" value="ThrRS/AlaRS common domain"/>
    <property type="match status" value="1"/>
</dbReference>
<dbReference type="PROSITE" id="PS50862">
    <property type="entry name" value="AA_TRNA_LIGASE_II"/>
    <property type="match status" value="1"/>
</dbReference>
<dbReference type="PROSITE" id="PS51880">
    <property type="entry name" value="TGS"/>
    <property type="match status" value="1"/>
</dbReference>
<organism>
    <name type="scientific">Chlorobium limicola (strain DSM 245 / NBRC 103803 / 6330)</name>
    <dbReference type="NCBI Taxonomy" id="290315"/>
    <lineage>
        <taxon>Bacteria</taxon>
        <taxon>Pseudomonadati</taxon>
        <taxon>Chlorobiota</taxon>
        <taxon>Chlorobiia</taxon>
        <taxon>Chlorobiales</taxon>
        <taxon>Chlorobiaceae</taxon>
        <taxon>Chlorobium/Pelodictyon group</taxon>
        <taxon>Chlorobium</taxon>
    </lineage>
</organism>
<proteinExistence type="inferred from homology"/>
<gene>
    <name evidence="1" type="primary">thrS</name>
    <name type="ordered locus">Clim_0156</name>
</gene>